<reference key="1">
    <citation type="journal article" date="2005" name="J. Bacteriol.">
        <title>Whole-genome sequence analysis of Pseudomonas syringae pv. phaseolicola 1448A reveals divergence among pathovars in genes involved in virulence and transposition.</title>
        <authorList>
            <person name="Joardar V."/>
            <person name="Lindeberg M."/>
            <person name="Jackson R.W."/>
            <person name="Selengut J."/>
            <person name="Dodson R."/>
            <person name="Brinkac L.M."/>
            <person name="Daugherty S.C."/>
            <person name="DeBoy R.T."/>
            <person name="Durkin A.S."/>
            <person name="Gwinn Giglio M."/>
            <person name="Madupu R."/>
            <person name="Nelson W.C."/>
            <person name="Rosovitz M.J."/>
            <person name="Sullivan S.A."/>
            <person name="Crabtree J."/>
            <person name="Creasy T."/>
            <person name="Davidsen T.M."/>
            <person name="Haft D.H."/>
            <person name="Zafar N."/>
            <person name="Zhou L."/>
            <person name="Halpin R."/>
            <person name="Holley T."/>
            <person name="Khouri H.M."/>
            <person name="Feldblyum T.V."/>
            <person name="White O."/>
            <person name="Fraser C.M."/>
            <person name="Chatterjee A.K."/>
            <person name="Cartinhour S."/>
            <person name="Schneider D."/>
            <person name="Mansfield J.W."/>
            <person name="Collmer A."/>
            <person name="Buell R."/>
        </authorList>
    </citation>
    <scope>NUCLEOTIDE SEQUENCE [LARGE SCALE GENOMIC DNA]</scope>
    <source>
        <strain>1448A / Race 6</strain>
    </source>
</reference>
<protein>
    <recommendedName>
        <fullName evidence="1">Ribosome-recycling factor</fullName>
        <shortName evidence="1">RRF</shortName>
    </recommendedName>
    <alternativeName>
        <fullName evidence="1">Ribosome-releasing factor</fullName>
    </alternativeName>
</protein>
<dbReference type="EMBL" id="CP000058">
    <property type="protein sequence ID" value="AAZ33400.1"/>
    <property type="molecule type" value="Genomic_DNA"/>
</dbReference>
<dbReference type="RefSeq" id="WP_004657953.1">
    <property type="nucleotide sequence ID" value="NC_005773.3"/>
</dbReference>
<dbReference type="SMR" id="Q48F62"/>
<dbReference type="GeneID" id="69858406"/>
<dbReference type="KEGG" id="psp:PSPPH_3837"/>
<dbReference type="eggNOG" id="COG0233">
    <property type="taxonomic scope" value="Bacteria"/>
</dbReference>
<dbReference type="HOGENOM" id="CLU_073981_2_1_6"/>
<dbReference type="Proteomes" id="UP000000551">
    <property type="component" value="Chromosome"/>
</dbReference>
<dbReference type="GO" id="GO:0005829">
    <property type="term" value="C:cytosol"/>
    <property type="evidence" value="ECO:0007669"/>
    <property type="project" value="GOC"/>
</dbReference>
<dbReference type="GO" id="GO:0043023">
    <property type="term" value="F:ribosomal large subunit binding"/>
    <property type="evidence" value="ECO:0007669"/>
    <property type="project" value="TreeGrafter"/>
</dbReference>
<dbReference type="GO" id="GO:0002184">
    <property type="term" value="P:cytoplasmic translational termination"/>
    <property type="evidence" value="ECO:0007669"/>
    <property type="project" value="TreeGrafter"/>
</dbReference>
<dbReference type="CDD" id="cd00520">
    <property type="entry name" value="RRF"/>
    <property type="match status" value="1"/>
</dbReference>
<dbReference type="FunFam" id="1.10.132.20:FF:000001">
    <property type="entry name" value="Ribosome-recycling factor"/>
    <property type="match status" value="1"/>
</dbReference>
<dbReference type="FunFam" id="3.30.1360.40:FF:000001">
    <property type="entry name" value="Ribosome-recycling factor"/>
    <property type="match status" value="1"/>
</dbReference>
<dbReference type="Gene3D" id="3.30.1360.40">
    <property type="match status" value="1"/>
</dbReference>
<dbReference type="Gene3D" id="1.10.132.20">
    <property type="entry name" value="Ribosome-recycling factor"/>
    <property type="match status" value="1"/>
</dbReference>
<dbReference type="HAMAP" id="MF_00040">
    <property type="entry name" value="RRF"/>
    <property type="match status" value="1"/>
</dbReference>
<dbReference type="InterPro" id="IPR002661">
    <property type="entry name" value="Ribosome_recyc_fac"/>
</dbReference>
<dbReference type="InterPro" id="IPR023584">
    <property type="entry name" value="Ribosome_recyc_fac_dom"/>
</dbReference>
<dbReference type="InterPro" id="IPR036191">
    <property type="entry name" value="RRF_sf"/>
</dbReference>
<dbReference type="NCBIfam" id="TIGR00496">
    <property type="entry name" value="frr"/>
    <property type="match status" value="1"/>
</dbReference>
<dbReference type="PANTHER" id="PTHR20982:SF3">
    <property type="entry name" value="MITOCHONDRIAL RIBOSOME RECYCLING FACTOR PSEUDO 1"/>
    <property type="match status" value="1"/>
</dbReference>
<dbReference type="PANTHER" id="PTHR20982">
    <property type="entry name" value="RIBOSOME RECYCLING FACTOR"/>
    <property type="match status" value="1"/>
</dbReference>
<dbReference type="Pfam" id="PF01765">
    <property type="entry name" value="RRF"/>
    <property type="match status" value="1"/>
</dbReference>
<dbReference type="SUPFAM" id="SSF55194">
    <property type="entry name" value="Ribosome recycling factor, RRF"/>
    <property type="match status" value="1"/>
</dbReference>
<comment type="function">
    <text evidence="1">Responsible for the release of ribosomes from messenger RNA at the termination of protein biosynthesis. May increase the efficiency of translation by recycling ribosomes from one round of translation to another.</text>
</comment>
<comment type="subcellular location">
    <subcellularLocation>
        <location evidence="1">Cytoplasm</location>
    </subcellularLocation>
</comment>
<comment type="similarity">
    <text evidence="1">Belongs to the RRF family.</text>
</comment>
<organism>
    <name type="scientific">Pseudomonas savastanoi pv. phaseolicola (strain 1448A / Race 6)</name>
    <name type="common">Pseudomonas syringae pv. phaseolicola (strain 1448A / Race 6)</name>
    <dbReference type="NCBI Taxonomy" id="264730"/>
    <lineage>
        <taxon>Bacteria</taxon>
        <taxon>Pseudomonadati</taxon>
        <taxon>Pseudomonadota</taxon>
        <taxon>Gammaproteobacteria</taxon>
        <taxon>Pseudomonadales</taxon>
        <taxon>Pseudomonadaceae</taxon>
        <taxon>Pseudomonas</taxon>
    </lineage>
</organism>
<name>RRF_PSE14</name>
<sequence>MINEIKKDAQTRMQKSLESLTHAFTRIRTGKAHPSILGGVMVPYYGADTPLSQVANVTVKDSRTLQVVAFERNMLAAVDKAIQSSGLGFNPTNLGELLLISMPALTEETRKGFTKQARDAAEDARVAVRNIRRDALSQLKDLVKEKEISEDEERRAADDVQKLTDKFVAEIEVAVKQKEADLMAV</sequence>
<proteinExistence type="inferred from homology"/>
<evidence type="ECO:0000255" key="1">
    <source>
        <dbReference type="HAMAP-Rule" id="MF_00040"/>
    </source>
</evidence>
<keyword id="KW-0963">Cytoplasm</keyword>
<keyword id="KW-0648">Protein biosynthesis</keyword>
<feature type="chain" id="PRO_1000003228" description="Ribosome-recycling factor">
    <location>
        <begin position="1"/>
        <end position="185"/>
    </location>
</feature>
<accession>Q48F62</accession>
<gene>
    <name evidence="1" type="primary">frr</name>
    <name type="ordered locus">PSPPH_3837</name>
</gene>